<name>NIG2A_ODOHO</name>
<proteinExistence type="evidence at protein level"/>
<dbReference type="GO" id="GO:0005576">
    <property type="term" value="C:extracellular region"/>
    <property type="evidence" value="ECO:0007669"/>
    <property type="project" value="UniProtKB-SubCell"/>
</dbReference>
<dbReference type="GO" id="GO:0050829">
    <property type="term" value="P:defense response to Gram-negative bacterium"/>
    <property type="evidence" value="ECO:0007669"/>
    <property type="project" value="UniProtKB-ARBA"/>
</dbReference>
<dbReference type="GO" id="GO:0050830">
    <property type="term" value="P:defense response to Gram-positive bacterium"/>
    <property type="evidence" value="ECO:0007669"/>
    <property type="project" value="UniProtKB-ARBA"/>
</dbReference>
<dbReference type="InterPro" id="IPR032749">
    <property type="entry name" value="Nigrocin"/>
</dbReference>
<dbReference type="Pfam" id="PF16047">
    <property type="entry name" value="Antimicrobial22"/>
    <property type="match status" value="1"/>
</dbReference>
<sequence length="21" mass="1965">GLLGSLFGAGKKVACALSGLC</sequence>
<protein>
    <recommendedName>
        <fullName>Nigrocin-2HSa</fullName>
    </recommendedName>
</protein>
<feature type="peptide" id="PRO_0000366048" description="Nigrocin-2HSa">
    <location>
        <begin position="1"/>
        <end position="21"/>
    </location>
</feature>
<feature type="disulfide bond">
    <location>
        <begin position="15"/>
        <end position="21"/>
    </location>
</feature>
<keyword id="KW-0878">Amphibian defense peptide</keyword>
<keyword id="KW-0044">Antibiotic</keyword>
<keyword id="KW-0929">Antimicrobial</keyword>
<keyword id="KW-0903">Direct protein sequencing</keyword>
<keyword id="KW-1015">Disulfide bond</keyword>
<keyword id="KW-0964">Secreted</keyword>
<evidence type="ECO:0000269" key="1">
    <source>
    </source>
</evidence>
<evidence type="ECO:0000305" key="2"/>
<organism>
    <name type="scientific">Odorrana hosii</name>
    <name type="common">Hose's rock frog</name>
    <name type="synonym">Rana hosii</name>
    <dbReference type="NCBI Taxonomy" id="310666"/>
    <lineage>
        <taxon>Eukaryota</taxon>
        <taxon>Metazoa</taxon>
        <taxon>Chordata</taxon>
        <taxon>Craniata</taxon>
        <taxon>Vertebrata</taxon>
        <taxon>Euteleostomi</taxon>
        <taxon>Amphibia</taxon>
        <taxon>Batrachia</taxon>
        <taxon>Anura</taxon>
        <taxon>Neobatrachia</taxon>
        <taxon>Ranoidea</taxon>
        <taxon>Ranidae</taxon>
        <taxon>Odorrana</taxon>
    </lineage>
</organism>
<accession>P0C8U0</accession>
<comment type="function">
    <text evidence="1">Has antibacterial activity against the Gram-positive bacterium S.aureus ATCC 25923 (MIC=56 uM) and the Gram-negative bacterium E.coli ATCC 25726 (MIC=28 uM).</text>
</comment>
<comment type="subcellular location">
    <subcellularLocation>
        <location>Secreted</location>
    </subcellularLocation>
</comment>
<comment type="tissue specificity">
    <text>Expressed by the skin glands.</text>
</comment>
<comment type="mass spectrometry" mass="1962.0" method="MALDI" evidence="1"/>
<comment type="similarity">
    <text evidence="2">Belongs to the frog skin active peptide (FSAP) family. Brevinin subfamily.</text>
</comment>
<reference key="1">
    <citation type="journal article" date="2008" name="Toxicon">
        <title>Characterization of antimicrobial peptides from the skin secretions of the Malaysian frogs, Odorrana hosii and Hylarana picturata (Anura:Ranidae).</title>
        <authorList>
            <person name="Conlon J.M."/>
            <person name="Kolodziejek J."/>
            <person name="Nowotny N."/>
            <person name="Leprince J."/>
            <person name="Vaudry H."/>
            <person name="Coquet L."/>
            <person name="Jouenne T."/>
            <person name="King J.D."/>
        </authorList>
    </citation>
    <scope>PROTEIN SEQUENCE</scope>
    <scope>FUNCTION</scope>
    <scope>MASS SPECTROMETRY</scope>
    <source>
        <tissue>Skin secretion</tissue>
    </source>
</reference>